<sequence length="553" mass="55876">MLQSSNHHYLRPDYMTAAAAPTAQLDNKSSPLALLAQTCSAIGADTTNPKLLAANIEKSTKQLQHHPKGSSGSGGSGSFGLSQQASMDGSARDKSSPVSSHSSSVSTGSVEQQQLPPAHGSSSSSKPTPTTFKPYEPNNNISNITTAADCGATNLSSNNTSAQQRVKTPKSMTNGGGQRCDSNQSASSQHRESPTAAGSLRRTPTSGLAGGVMQHNGSPGLPPTASTTPGRSNSKESAAMHSPSAAAAAAAAAAQIASSNRLQEAALAAAKEANYVKALHAASQQGSASAAAAAASYYPPGYGSPYSMDLMTASSLMSPHHAMFKASAMNPYLNYARMKGLTEQSMMAATPNVCRDPYCTGCPASPHYINKAAGQPCPAGCPQCEGGGGGGGGSSKSSGSQGGSGGSSSAAAAAAAAAASSYHAQLAALAAASQMPYVCSWIGSDAAYCGKRFGTSDDLFQHLRTHTASVPDAVLSAAAAGGIPPNHPLFQRTYPTPPLSPLSAARYHPYGKPSMLPPSLAPPGMPGLPPHPALAQYFAPYSLYGPRMGSSHP</sequence>
<keyword id="KW-0025">Alternative splicing</keyword>
<keyword id="KW-0217">Developmental protein</keyword>
<keyword id="KW-0479">Metal-binding</keyword>
<keyword id="KW-0914">Notch signaling pathway</keyword>
<keyword id="KW-1185">Reference proteome</keyword>
<keyword id="KW-0862">Zinc</keyword>
<keyword id="KW-0863">Zinc-finger</keyword>
<protein>
    <recommendedName>
        <fullName>Zinc finger protein Elbow</fullName>
    </recommendedName>
</protein>
<name>ELBOW_DROME</name>
<proteinExistence type="evidence at protein level"/>
<evidence type="ECO:0000255" key="1">
    <source>
        <dbReference type="PROSITE-ProRule" id="PRU00042"/>
    </source>
</evidence>
<evidence type="ECO:0000256" key="2">
    <source>
        <dbReference type="SAM" id="MobiDB-lite"/>
    </source>
</evidence>
<evidence type="ECO:0000269" key="3">
    <source>
    </source>
</evidence>
<evidence type="ECO:0000269" key="4">
    <source>
    </source>
</evidence>
<evidence type="ECO:0000269" key="5">
    <source>
    </source>
</evidence>
<evidence type="ECO:0000303" key="6">
    <source ref="4"/>
</evidence>
<evidence type="ECO:0000305" key="7"/>
<organism>
    <name type="scientific">Drosophila melanogaster</name>
    <name type="common">Fruit fly</name>
    <dbReference type="NCBI Taxonomy" id="7227"/>
    <lineage>
        <taxon>Eukaryota</taxon>
        <taxon>Metazoa</taxon>
        <taxon>Ecdysozoa</taxon>
        <taxon>Arthropoda</taxon>
        <taxon>Hexapoda</taxon>
        <taxon>Insecta</taxon>
        <taxon>Pterygota</taxon>
        <taxon>Neoptera</taxon>
        <taxon>Endopterygota</taxon>
        <taxon>Diptera</taxon>
        <taxon>Brachycera</taxon>
        <taxon>Muscomorpha</taxon>
        <taxon>Ephydroidea</taxon>
        <taxon>Drosophilidae</taxon>
        <taxon>Drosophila</taxon>
        <taxon>Sophophora</taxon>
    </lineage>
</organism>
<feature type="chain" id="PRO_0000292213" description="Zinc finger protein Elbow">
    <location>
        <begin position="1"/>
        <end position="553"/>
    </location>
</feature>
<feature type="zinc finger region" description="C2H2-type" evidence="1">
    <location>
        <begin position="437"/>
        <end position="466"/>
    </location>
</feature>
<feature type="region of interest" description="Disordered" evidence="2">
    <location>
        <begin position="59"/>
        <end position="243"/>
    </location>
</feature>
<feature type="region of interest" description="Interaction with noc">
    <location>
        <begin position="287"/>
        <end position="553"/>
    </location>
</feature>
<feature type="region of interest" description="Self-association">
    <location>
        <begin position="287"/>
        <end position="480"/>
    </location>
</feature>
<feature type="region of interest" description="Disordered" evidence="2">
    <location>
        <begin position="388"/>
        <end position="407"/>
    </location>
</feature>
<feature type="compositionally biased region" description="Low complexity" evidence="2">
    <location>
        <begin position="96"/>
        <end position="110"/>
    </location>
</feature>
<feature type="compositionally biased region" description="Low complexity" evidence="2">
    <location>
        <begin position="121"/>
        <end position="134"/>
    </location>
</feature>
<feature type="compositionally biased region" description="Polar residues" evidence="2">
    <location>
        <begin position="137"/>
        <end position="146"/>
    </location>
</feature>
<feature type="compositionally biased region" description="Polar residues" evidence="2">
    <location>
        <begin position="153"/>
        <end position="173"/>
    </location>
</feature>
<feature type="compositionally biased region" description="Polar residues" evidence="2">
    <location>
        <begin position="224"/>
        <end position="236"/>
    </location>
</feature>
<feature type="compositionally biased region" description="Gly residues" evidence="2">
    <location>
        <begin position="388"/>
        <end position="406"/>
    </location>
</feature>
<feature type="splice variant" id="VSP_054449" description="In isoform C." evidence="6">
    <location>
        <position position="24"/>
    </location>
</feature>
<feature type="sequence conflict" description="In Ref. 1; AAM48283." evidence="7" ref="1">
    <original>H</original>
    <variation>Q</variation>
    <location>
        <position position="66"/>
    </location>
</feature>
<feature type="sequence conflict" description="In Ref. 1; AAM48283." evidence="7" ref="1">
    <original>G</original>
    <variation>S</variation>
    <location>
        <position position="211"/>
    </location>
</feature>
<accession>Q9VJS8</accession>
<accession>Q7KT93</accession>
<accession>Q8IGL9</accession>
<accession>Q8MTC6</accession>
<accession>Q9NKC3</accession>
<gene>
    <name type="primary">elB</name>
    <name type="ORF">CG4220</name>
</gene>
<reference key="1">
    <citation type="journal article" date="2002" name="Development">
        <title>Elbow and Noc define a family of zinc finger proteins controlling morphogenesis of specific tracheal branches.</title>
        <authorList>
            <person name="Dorfman R."/>
            <person name="Glazer L."/>
            <person name="Weihe U."/>
            <person name="Wernet M.F."/>
            <person name="Shilo B.-Z."/>
        </authorList>
    </citation>
    <scope>NUCLEOTIDE SEQUENCE [MRNA] (ISOFORM D)</scope>
    <scope>FUNCTION</scope>
    <scope>SELF-ASSOCIATION</scope>
    <scope>INTERACTION WITH GRO AND NOC</scope>
    <scope>DEVELOPMENTAL STAGE</scope>
</reference>
<reference key="2">
    <citation type="journal article" date="2000" name="Science">
        <title>The genome sequence of Drosophila melanogaster.</title>
        <authorList>
            <person name="Adams M.D."/>
            <person name="Celniker S.E."/>
            <person name="Holt R.A."/>
            <person name="Evans C.A."/>
            <person name="Gocayne J.D."/>
            <person name="Amanatides P.G."/>
            <person name="Scherer S.E."/>
            <person name="Li P.W."/>
            <person name="Hoskins R.A."/>
            <person name="Galle R.F."/>
            <person name="George R.A."/>
            <person name="Lewis S.E."/>
            <person name="Richards S."/>
            <person name="Ashburner M."/>
            <person name="Henderson S.N."/>
            <person name="Sutton G.G."/>
            <person name="Wortman J.R."/>
            <person name="Yandell M.D."/>
            <person name="Zhang Q."/>
            <person name="Chen L.X."/>
            <person name="Brandon R.C."/>
            <person name="Rogers Y.-H.C."/>
            <person name="Blazej R.G."/>
            <person name="Champe M."/>
            <person name="Pfeiffer B.D."/>
            <person name="Wan K.H."/>
            <person name="Doyle C."/>
            <person name="Baxter E.G."/>
            <person name="Helt G."/>
            <person name="Nelson C.R."/>
            <person name="Miklos G.L.G."/>
            <person name="Abril J.F."/>
            <person name="Agbayani A."/>
            <person name="An H.-J."/>
            <person name="Andrews-Pfannkoch C."/>
            <person name="Baldwin D."/>
            <person name="Ballew R.M."/>
            <person name="Basu A."/>
            <person name="Baxendale J."/>
            <person name="Bayraktaroglu L."/>
            <person name="Beasley E.M."/>
            <person name="Beeson K.Y."/>
            <person name="Benos P.V."/>
            <person name="Berman B.P."/>
            <person name="Bhandari D."/>
            <person name="Bolshakov S."/>
            <person name="Borkova D."/>
            <person name="Botchan M.R."/>
            <person name="Bouck J."/>
            <person name="Brokstein P."/>
            <person name="Brottier P."/>
            <person name="Burtis K.C."/>
            <person name="Busam D.A."/>
            <person name="Butler H."/>
            <person name="Cadieu E."/>
            <person name="Center A."/>
            <person name="Chandra I."/>
            <person name="Cherry J.M."/>
            <person name="Cawley S."/>
            <person name="Dahlke C."/>
            <person name="Davenport L.B."/>
            <person name="Davies P."/>
            <person name="de Pablos B."/>
            <person name="Delcher A."/>
            <person name="Deng Z."/>
            <person name="Mays A.D."/>
            <person name="Dew I."/>
            <person name="Dietz S.M."/>
            <person name="Dodson K."/>
            <person name="Doup L.E."/>
            <person name="Downes M."/>
            <person name="Dugan-Rocha S."/>
            <person name="Dunkov B.C."/>
            <person name="Dunn P."/>
            <person name="Durbin K.J."/>
            <person name="Evangelista C.C."/>
            <person name="Ferraz C."/>
            <person name="Ferriera S."/>
            <person name="Fleischmann W."/>
            <person name="Fosler C."/>
            <person name="Gabrielian A.E."/>
            <person name="Garg N.S."/>
            <person name="Gelbart W.M."/>
            <person name="Glasser K."/>
            <person name="Glodek A."/>
            <person name="Gong F."/>
            <person name="Gorrell J.H."/>
            <person name="Gu Z."/>
            <person name="Guan P."/>
            <person name="Harris M."/>
            <person name="Harris N.L."/>
            <person name="Harvey D.A."/>
            <person name="Heiman T.J."/>
            <person name="Hernandez J.R."/>
            <person name="Houck J."/>
            <person name="Hostin D."/>
            <person name="Houston K.A."/>
            <person name="Howland T.J."/>
            <person name="Wei M.-H."/>
            <person name="Ibegwam C."/>
            <person name="Jalali M."/>
            <person name="Kalush F."/>
            <person name="Karpen G.H."/>
            <person name="Ke Z."/>
            <person name="Kennison J.A."/>
            <person name="Ketchum K.A."/>
            <person name="Kimmel B.E."/>
            <person name="Kodira C.D."/>
            <person name="Kraft C.L."/>
            <person name="Kravitz S."/>
            <person name="Kulp D."/>
            <person name="Lai Z."/>
            <person name="Lasko P."/>
            <person name="Lei Y."/>
            <person name="Levitsky A.A."/>
            <person name="Li J.H."/>
            <person name="Li Z."/>
            <person name="Liang Y."/>
            <person name="Lin X."/>
            <person name="Liu X."/>
            <person name="Mattei B."/>
            <person name="McIntosh T.C."/>
            <person name="McLeod M.P."/>
            <person name="McPherson D."/>
            <person name="Merkulov G."/>
            <person name="Milshina N.V."/>
            <person name="Mobarry C."/>
            <person name="Morris J."/>
            <person name="Moshrefi A."/>
            <person name="Mount S.M."/>
            <person name="Moy M."/>
            <person name="Murphy B."/>
            <person name="Murphy L."/>
            <person name="Muzny D.M."/>
            <person name="Nelson D.L."/>
            <person name="Nelson D.R."/>
            <person name="Nelson K.A."/>
            <person name="Nixon K."/>
            <person name="Nusskern D.R."/>
            <person name="Pacleb J.M."/>
            <person name="Palazzolo M."/>
            <person name="Pittman G.S."/>
            <person name="Pan S."/>
            <person name="Pollard J."/>
            <person name="Puri V."/>
            <person name="Reese M.G."/>
            <person name="Reinert K."/>
            <person name="Remington K."/>
            <person name="Saunders R.D.C."/>
            <person name="Scheeler F."/>
            <person name="Shen H."/>
            <person name="Shue B.C."/>
            <person name="Siden-Kiamos I."/>
            <person name="Simpson M."/>
            <person name="Skupski M.P."/>
            <person name="Smith T.J."/>
            <person name="Spier E."/>
            <person name="Spradling A.C."/>
            <person name="Stapleton M."/>
            <person name="Strong R."/>
            <person name="Sun E."/>
            <person name="Svirskas R."/>
            <person name="Tector C."/>
            <person name="Turner R."/>
            <person name="Venter E."/>
            <person name="Wang A.H."/>
            <person name="Wang X."/>
            <person name="Wang Z.-Y."/>
            <person name="Wassarman D.A."/>
            <person name="Weinstock G.M."/>
            <person name="Weissenbach J."/>
            <person name="Williams S.M."/>
            <person name="Woodage T."/>
            <person name="Worley K.C."/>
            <person name="Wu D."/>
            <person name="Yang S."/>
            <person name="Yao Q.A."/>
            <person name="Ye J."/>
            <person name="Yeh R.-F."/>
            <person name="Zaveri J.S."/>
            <person name="Zhan M."/>
            <person name="Zhang G."/>
            <person name="Zhao Q."/>
            <person name="Zheng L."/>
            <person name="Zheng X.H."/>
            <person name="Zhong F.N."/>
            <person name="Zhong W."/>
            <person name="Zhou X."/>
            <person name="Zhu S.C."/>
            <person name="Zhu X."/>
            <person name="Smith H.O."/>
            <person name="Gibbs R.A."/>
            <person name="Myers E.W."/>
            <person name="Rubin G.M."/>
            <person name="Venter J.C."/>
        </authorList>
    </citation>
    <scope>NUCLEOTIDE SEQUENCE [LARGE SCALE GENOMIC DNA]</scope>
    <source>
        <strain>Berkeley</strain>
    </source>
</reference>
<reference key="3">
    <citation type="journal article" date="2002" name="Genome Biol.">
        <title>Annotation of the Drosophila melanogaster euchromatic genome: a systematic review.</title>
        <authorList>
            <person name="Misra S."/>
            <person name="Crosby M.A."/>
            <person name="Mungall C.J."/>
            <person name="Matthews B.B."/>
            <person name="Campbell K.S."/>
            <person name="Hradecky P."/>
            <person name="Huang Y."/>
            <person name="Kaminker J.S."/>
            <person name="Millburn G.H."/>
            <person name="Prochnik S.E."/>
            <person name="Smith C.D."/>
            <person name="Tupy J.L."/>
            <person name="Whitfield E.J."/>
            <person name="Bayraktaroglu L."/>
            <person name="Berman B.P."/>
            <person name="Bettencourt B.R."/>
            <person name="Celniker S.E."/>
            <person name="de Grey A.D.N.J."/>
            <person name="Drysdale R.A."/>
            <person name="Harris N.L."/>
            <person name="Richter J."/>
            <person name="Russo S."/>
            <person name="Schroeder A.J."/>
            <person name="Shu S.Q."/>
            <person name="Stapleton M."/>
            <person name="Yamada C."/>
            <person name="Ashburner M."/>
            <person name="Gelbart W.M."/>
            <person name="Rubin G.M."/>
            <person name="Lewis S.E."/>
        </authorList>
    </citation>
    <scope>GENOME REANNOTATION</scope>
    <scope>ALTERNATIVE SPLICING</scope>
    <source>
        <strain>Berkeley</strain>
    </source>
</reference>
<reference key="4">
    <citation type="submission" date="2005-08" db="EMBL/GenBank/DDBJ databases">
        <authorList>
            <person name="Stapleton M."/>
            <person name="Carlson J.W."/>
            <person name="Chavez C."/>
            <person name="Frise E."/>
            <person name="George R.A."/>
            <person name="Pacleb J.M."/>
            <person name="Park S."/>
            <person name="Wan K.H."/>
            <person name="Yu C."/>
            <person name="Celniker S.E."/>
        </authorList>
    </citation>
    <scope>NUCLEOTIDE SEQUENCE [LARGE SCALE MRNA] (ISOFORM C)</scope>
    <source>
        <strain>Berkeley</strain>
        <tissue>Embryo</tissue>
    </source>
</reference>
<reference key="5">
    <citation type="journal article" date="2004" name="Development">
        <title>Proximodistal subdivision of Drosophila legs and wings: the elbow-no ocelli gene complex.</title>
        <authorList>
            <person name="Weihe U."/>
            <person name="Dorfman R."/>
            <person name="Wernet M.F."/>
            <person name="Cohen S.M."/>
            <person name="Milan M."/>
        </authorList>
    </citation>
    <scope>FUNCTION</scope>
    <scope>DEVELOPMENTAL STAGE</scope>
</reference>
<reference key="6">
    <citation type="journal article" date="2007" name="Dev. Biol.">
        <title>Growth control in the proliferative region of the Drosophila eye-head primordium: the elbow-noc gene complex.</title>
        <authorList>
            <person name="Luque C.M."/>
            <person name="Milan M."/>
        </authorList>
    </citation>
    <scope>FUNCTION</scope>
    <scope>DEVELOPMENTAL STAGE</scope>
</reference>
<dbReference type="EMBL" id="AY115567">
    <property type="protein sequence ID" value="AAM48283.1"/>
    <property type="molecule type" value="mRNA"/>
</dbReference>
<dbReference type="EMBL" id="AE014134">
    <property type="protein sequence ID" value="AAS64707.1"/>
    <property type="molecule type" value="Genomic_DNA"/>
</dbReference>
<dbReference type="EMBL" id="BT001713">
    <property type="protein sequence ID" value="AAN71468.1"/>
    <property type="molecule type" value="mRNA"/>
</dbReference>
<dbReference type="RefSeq" id="NP_523566.4">
    <molecule id="Q9VJS8-3"/>
    <property type="nucleotide sequence ID" value="NM_078842.5"/>
</dbReference>
<dbReference type="RefSeq" id="NP_995712.1">
    <molecule id="Q9VJS8-2"/>
    <property type="nucleotide sequence ID" value="NM_205990.2"/>
</dbReference>
<dbReference type="BioGRID" id="60868">
    <property type="interactions" value="32"/>
</dbReference>
<dbReference type="FunCoup" id="Q9VJS8">
    <property type="interactions" value="384"/>
</dbReference>
<dbReference type="IntAct" id="Q9VJS8">
    <property type="interactions" value="7"/>
</dbReference>
<dbReference type="STRING" id="7227.FBpp0309706"/>
<dbReference type="GlyGen" id="Q9VJS8">
    <property type="glycosylation" value="1 site"/>
</dbReference>
<dbReference type="PaxDb" id="7227-FBpp0089383"/>
<dbReference type="DNASU" id="34844"/>
<dbReference type="EnsemblMetazoa" id="FBtr0080637">
    <molecule id="Q9VJS8-2"/>
    <property type="protein sequence ID" value="FBpp0089383"/>
    <property type="gene ID" value="FBgn0004858"/>
</dbReference>
<dbReference type="EnsemblMetazoa" id="FBtr0342915">
    <molecule id="Q9VJS8-3"/>
    <property type="protein sequence ID" value="FBpp0309706"/>
    <property type="gene ID" value="FBgn0004858"/>
</dbReference>
<dbReference type="GeneID" id="34844"/>
<dbReference type="KEGG" id="dme:Dmel_CG4220"/>
<dbReference type="AGR" id="FB:FBgn0004858"/>
<dbReference type="CTD" id="34844"/>
<dbReference type="FlyBase" id="FBgn0004858">
    <property type="gene designation" value="elB"/>
</dbReference>
<dbReference type="VEuPathDB" id="VectorBase:FBgn0004858"/>
<dbReference type="eggNOG" id="ENOG502QUYV">
    <property type="taxonomic scope" value="Eukaryota"/>
</dbReference>
<dbReference type="GeneTree" id="ENSGT00390000014618"/>
<dbReference type="InParanoid" id="Q9VJS8"/>
<dbReference type="OMA" id="SDICVAW"/>
<dbReference type="OrthoDB" id="10054079at2759"/>
<dbReference type="Reactome" id="R-DME-212436">
    <property type="pathway name" value="Generic Transcription Pathway"/>
</dbReference>
<dbReference type="SignaLink" id="Q9VJS8"/>
<dbReference type="BioGRID-ORCS" id="34844">
    <property type="hits" value="0 hits in 3 CRISPR screens"/>
</dbReference>
<dbReference type="GenomeRNAi" id="34844"/>
<dbReference type="PRO" id="PR:Q9VJS8"/>
<dbReference type="Proteomes" id="UP000000803">
    <property type="component" value="Chromosome 2L"/>
</dbReference>
<dbReference type="Bgee" id="FBgn0004858">
    <property type="expression patterns" value="Expressed in adult tracheocyte (Drosophila) in insect leg and 270 other cell types or tissues"/>
</dbReference>
<dbReference type="GO" id="GO:0000228">
    <property type="term" value="C:nuclear chromosome"/>
    <property type="evidence" value="ECO:0000314"/>
    <property type="project" value="FlyBase"/>
</dbReference>
<dbReference type="GO" id="GO:0005634">
    <property type="term" value="C:nucleus"/>
    <property type="evidence" value="ECO:0000314"/>
    <property type="project" value="FlyBase"/>
</dbReference>
<dbReference type="GO" id="GO:0008270">
    <property type="term" value="F:zinc ion binding"/>
    <property type="evidence" value="ECO:0007669"/>
    <property type="project" value="UniProtKB-KW"/>
</dbReference>
<dbReference type="GO" id="GO:0001752">
    <property type="term" value="P:compound eye photoreceptor fate commitment"/>
    <property type="evidence" value="ECO:0000316"/>
    <property type="project" value="FlyBase"/>
</dbReference>
<dbReference type="GO" id="GO:0035214">
    <property type="term" value="P:eye-antennal disc development"/>
    <property type="evidence" value="ECO:0000315"/>
    <property type="project" value="UniProtKB"/>
</dbReference>
<dbReference type="GO" id="GO:0048737">
    <property type="term" value="P:imaginal disc-derived appendage development"/>
    <property type="evidence" value="ECO:0000315"/>
    <property type="project" value="UniProtKB"/>
</dbReference>
<dbReference type="GO" id="GO:0045892">
    <property type="term" value="P:negative regulation of DNA-templated transcription"/>
    <property type="evidence" value="ECO:0000318"/>
    <property type="project" value="GO_Central"/>
</dbReference>
<dbReference type="GO" id="GO:0010629">
    <property type="term" value="P:negative regulation of gene expression"/>
    <property type="evidence" value="ECO:0000315"/>
    <property type="project" value="FlyBase"/>
</dbReference>
<dbReference type="GO" id="GO:0007219">
    <property type="term" value="P:Notch signaling pathway"/>
    <property type="evidence" value="ECO:0007669"/>
    <property type="project" value="UniProtKB-KW"/>
</dbReference>
<dbReference type="GO" id="GO:0007424">
    <property type="term" value="P:open tracheal system development"/>
    <property type="evidence" value="ECO:0000315"/>
    <property type="project" value="FlyBase"/>
</dbReference>
<dbReference type="GO" id="GO:0035220">
    <property type="term" value="P:wing disc development"/>
    <property type="evidence" value="ECO:0000315"/>
    <property type="project" value="UniProtKB"/>
</dbReference>
<dbReference type="Gene3D" id="3.30.160.60">
    <property type="entry name" value="Classic Zinc Finger"/>
    <property type="match status" value="1"/>
</dbReference>
<dbReference type="InterPro" id="IPR051520">
    <property type="entry name" value="Elbow/Noc_ZnFinger"/>
</dbReference>
<dbReference type="InterPro" id="IPR013087">
    <property type="entry name" value="Znf_C2H2_type"/>
</dbReference>
<dbReference type="PANTHER" id="PTHR12522:SF4">
    <property type="entry name" value="ZINC FINGER PROTEIN ELBOW"/>
    <property type="match status" value="1"/>
</dbReference>
<dbReference type="PANTHER" id="PTHR12522">
    <property type="entry name" value="ZINC-FINGER PROTEIN NOLZ1-RELATED"/>
    <property type="match status" value="1"/>
</dbReference>
<dbReference type="PROSITE" id="PS50157">
    <property type="entry name" value="ZINC_FINGER_C2H2_2"/>
    <property type="match status" value="1"/>
</dbReference>
<comment type="function">
    <text evidence="3 4 5">May negatively regulate Notch-induced cell proliferation in the eye-head primordium. May act in leg and wing primordia to negatively regulate body-wall specifying genes and thereby promote appendage formation. Required for tracheal development.</text>
</comment>
<comment type="subunit">
    <text evidence="3">Self-associates. Interacts with gro and noc.</text>
</comment>
<comment type="alternative products">
    <event type="alternative splicing"/>
    <isoform>
        <id>Q9VJS8-3</id>
        <name>D</name>
        <sequence type="displayed"/>
    </isoform>
    <isoform>
        <id>Q9VJS8-2</id>
        <name>C</name>
        <sequence type="described" ref="VSP_054449"/>
    </isoform>
</comment>
<comment type="developmental stage">
    <text evidence="3 4 5">Expressed in tracheal pit cells from stage 11. At stage 12, expression becomes restricted to lateral anterior and posterior tracheal branches. Expressed in the highly proliferative region of the eye-head primordium. Expressed in the distal regions of leg and wing imaginal disks.</text>
</comment>
<comment type="similarity">
    <text evidence="7">Belongs to the Elbow/Noc family.</text>
</comment>